<reference key="1">
    <citation type="journal article" date="1999" name="Infect. Immun.">
        <title>The gene locus yijP contributes to Escherichia coli K1 invasion of brain microvascular endothelial cells.</title>
        <authorList>
            <person name="Wang Y."/>
            <person name="Huang S.-H."/>
            <person name="Wass C.A."/>
            <person name="Stins M.F."/>
            <person name="Kim K.S."/>
        </authorList>
    </citation>
    <scope>NUCLEOTIDE SEQUENCE [GENOMIC DNA]</scope>
    <scope>FUNCTION IN PATHOGENESIS</scope>
    <source>
        <strain>RS218 / NMEC</strain>
    </source>
</reference>
<name>EPTC_ECOK8</name>
<keyword id="KW-0997">Cell inner membrane</keyword>
<keyword id="KW-1003">Cell membrane</keyword>
<keyword id="KW-0444">Lipid biosynthesis</keyword>
<keyword id="KW-0443">Lipid metabolism</keyword>
<keyword id="KW-0448">Lipopolysaccharide biosynthesis</keyword>
<keyword id="KW-0472">Membrane</keyword>
<keyword id="KW-0808">Transferase</keyword>
<keyword id="KW-0812">Transmembrane</keyword>
<keyword id="KW-1133">Transmembrane helix</keyword>
<dbReference type="EC" id="2.7.-.-"/>
<dbReference type="EMBL" id="AF112861">
    <property type="protein sequence ID" value="AAD28716.1"/>
    <property type="molecule type" value="Genomic_DNA"/>
</dbReference>
<dbReference type="RefSeq" id="WP_000556298.1">
    <property type="nucleotide sequence ID" value="NZ_JWZW01000013.1"/>
</dbReference>
<dbReference type="SMR" id="P0CB40"/>
<dbReference type="STRING" id="585034.ECIAI1_4163"/>
<dbReference type="eggNOG" id="COG2194">
    <property type="taxonomic scope" value="Bacteria"/>
</dbReference>
<dbReference type="UniPathway" id="UPA00958"/>
<dbReference type="GO" id="GO:0005886">
    <property type="term" value="C:plasma membrane"/>
    <property type="evidence" value="ECO:0007669"/>
    <property type="project" value="UniProtKB-SubCell"/>
</dbReference>
<dbReference type="GO" id="GO:0016776">
    <property type="term" value="F:phosphotransferase activity, phosphate group as acceptor"/>
    <property type="evidence" value="ECO:0007669"/>
    <property type="project" value="TreeGrafter"/>
</dbReference>
<dbReference type="GO" id="GO:0009244">
    <property type="term" value="P:lipopolysaccharide core region biosynthetic process"/>
    <property type="evidence" value="ECO:0007669"/>
    <property type="project" value="UniProtKB-UniPathway"/>
</dbReference>
<dbReference type="CDD" id="cd16017">
    <property type="entry name" value="LptA"/>
    <property type="match status" value="1"/>
</dbReference>
<dbReference type="FunFam" id="3.40.720.10:FF:000016">
    <property type="entry name" value="Phosphoethanolamine transferase CptA"/>
    <property type="match status" value="1"/>
</dbReference>
<dbReference type="Gene3D" id="3.40.720.10">
    <property type="entry name" value="Alkaline Phosphatase, subunit A"/>
    <property type="match status" value="1"/>
</dbReference>
<dbReference type="InterPro" id="IPR017850">
    <property type="entry name" value="Alkaline_phosphatase_core_sf"/>
</dbReference>
<dbReference type="InterPro" id="IPR047787">
    <property type="entry name" value="EptC/CptA"/>
</dbReference>
<dbReference type="InterPro" id="IPR040423">
    <property type="entry name" value="PEA_transferase"/>
</dbReference>
<dbReference type="InterPro" id="IPR000917">
    <property type="entry name" value="Sulfatase_N"/>
</dbReference>
<dbReference type="NCBIfam" id="NF012179">
    <property type="entry name" value="CptA"/>
    <property type="match status" value="1"/>
</dbReference>
<dbReference type="NCBIfam" id="NF007933">
    <property type="entry name" value="PRK10649.1"/>
    <property type="match status" value="1"/>
</dbReference>
<dbReference type="PANTHER" id="PTHR30443">
    <property type="entry name" value="INNER MEMBRANE PROTEIN"/>
    <property type="match status" value="1"/>
</dbReference>
<dbReference type="PANTHER" id="PTHR30443:SF2">
    <property type="entry name" value="PHOSPHOETHANOLAMINE TRANSFERASE EPTC"/>
    <property type="match status" value="1"/>
</dbReference>
<dbReference type="Pfam" id="PF00884">
    <property type="entry name" value="Sulfatase"/>
    <property type="match status" value="1"/>
</dbReference>
<dbReference type="SUPFAM" id="SSF53649">
    <property type="entry name" value="Alkaline phosphatase-like"/>
    <property type="match status" value="1"/>
</dbReference>
<feature type="chain" id="PRO_0000383951" description="Phosphoethanolamine transferase EptC">
    <location>
        <begin position="1"/>
        <end position="577"/>
    </location>
</feature>
<feature type="transmembrane region" description="Helical" evidence="2">
    <location>
        <begin position="17"/>
        <end position="37"/>
    </location>
</feature>
<feature type="transmembrane region" description="Helical" evidence="2">
    <location>
        <begin position="44"/>
        <end position="64"/>
    </location>
</feature>
<feature type="transmembrane region" description="Helical" evidence="2">
    <location>
        <begin position="69"/>
        <end position="89"/>
    </location>
</feature>
<feature type="transmembrane region" description="Helical" evidence="2">
    <location>
        <begin position="119"/>
        <end position="139"/>
    </location>
</feature>
<feature type="transmembrane region" description="Helical" evidence="2">
    <location>
        <begin position="154"/>
        <end position="174"/>
    </location>
</feature>
<protein>
    <recommendedName>
        <fullName>Phosphoethanolamine transferase EptC</fullName>
        <ecNumber>2.7.-.-</ecNumber>
    </recommendedName>
</protein>
<accession>P0CB40</accession>
<accession>P32678</accession>
<accession>Q2M8Q0</accession>
<accession>Q9S4U6</accession>
<comment type="function">
    <text evidence="1 3">Catalyzes the addition of a phosphoethanolamine moiety to the outer membrane lipopolysaccharide core (By similarity). Plays a role in the pathogenesis of E.coli meningitis. Required for invasion of E.coli K1 into brain microvascular endothelial cells (BMEC). Contributes to E.coli traversal across the blood-brain barrier.</text>
</comment>
<comment type="pathway">
    <text>Bacterial outer membrane biogenesis; LPS core biosynthesis.</text>
</comment>
<comment type="subcellular location">
    <subcellularLocation>
        <location evidence="1">Cell inner membrane</location>
        <topology evidence="1">Multi-pass membrane protein</topology>
    </subcellularLocation>
</comment>
<comment type="similarity">
    <text evidence="4">Belongs to the phosphoethanolamine transferase family. EptC/CptA subfamily.</text>
</comment>
<proteinExistence type="evidence at protein level"/>
<gene>
    <name type="primary">eptC</name>
    <name type="synonym">cptA</name>
    <name type="synonym">yijP</name>
</gene>
<evidence type="ECO:0000250" key="1"/>
<evidence type="ECO:0000255" key="2"/>
<evidence type="ECO:0000269" key="3">
    <source>
    </source>
</evidence>
<evidence type="ECO:0000305" key="4"/>
<sequence length="577" mass="66670">MHSTEVQAKPLFSWKALGWALLYFWFFSTLLQAIIYISGYSGTNGIRDSLLFSSLWLIPVFLFPKRIKIIAAVIGVVLWAASLAALCYYVIYGQEFSQSVLFVMFETNTNEASEYLSQYFSLKIVLIALAYTAVAVLLWTRLRPVYIPKPWRYVVSFALLYGLILHPIAMNTFIKNKPFEKTLDNLASRMEPAAPWQFLTGYYQYRQQLNSLTKLLNENNALPPLANFKDESGNEPRTLVLVIGESTQRGRMSLYGYPRETTPELDALHKTDPNLTVFNNVVTSRPYTIEILQQALTFANEKNPDLYLTQPSLMNMMKQAGYKTFWITNQQTMTARNTMLTVFSRQTDKQYYMNQQRTQSAREYDTNVLKPFQEVLKDPAPKKLIIVHLLGTHIKYKYRYPEDQGKFDGNTEHVPPGLNAEELESYNDYDNANLYNDHVVASLIKDFKATDPNGFLVYFSDHGEEVYDTPPHKTQGRNEDNPTRHMYTIPFLLWTSEKWQATHPRDFSQDVDRKYSLAELIHTWSDLAGLSYDGYDPTRSVVNPQFKETTRWIGNPYKKNALIDYDTLPYGDQVGNQ</sequence>
<organism>
    <name type="scientific">Escherichia coli O18:K1:H7 (strain RS218 / NMEC)</name>
    <dbReference type="NCBI Taxonomy" id="439184"/>
    <lineage>
        <taxon>Bacteria</taxon>
        <taxon>Pseudomonadati</taxon>
        <taxon>Pseudomonadota</taxon>
        <taxon>Gammaproteobacteria</taxon>
        <taxon>Enterobacterales</taxon>
        <taxon>Enterobacteriaceae</taxon>
        <taxon>Escherichia</taxon>
    </lineage>
</organism>